<keyword id="KW-0002">3D-structure</keyword>
<keyword id="KW-0028">Amino-acid biosynthesis</keyword>
<keyword id="KW-0057">Aromatic amino acid biosynthesis</keyword>
<keyword id="KW-0456">Lyase</keyword>
<keyword id="KW-1185">Reference proteome</keyword>
<keyword id="KW-0704">Schiff base</keyword>
<dbReference type="EC" id="4.2.1.10" evidence="1"/>
<dbReference type="EMBL" id="AE000657">
    <property type="protein sequence ID" value="AAC06389.1"/>
    <property type="molecule type" value="Genomic_DNA"/>
</dbReference>
<dbReference type="PIR" id="E70301">
    <property type="entry name" value="E70301"/>
</dbReference>
<dbReference type="RefSeq" id="NP_212999.1">
    <property type="nucleotide sequence ID" value="NC_000918.1"/>
</dbReference>
<dbReference type="RefSeq" id="WP_010879937.1">
    <property type="nucleotide sequence ID" value="NC_000918.1"/>
</dbReference>
<dbReference type="PDB" id="2EGZ">
    <property type="method" value="X-ray"/>
    <property type="resolution" value="1.75 A"/>
    <property type="chains" value="A/C=1-219"/>
</dbReference>
<dbReference type="PDB" id="2YSW">
    <property type="method" value="X-ray"/>
    <property type="resolution" value="2.25 A"/>
    <property type="chains" value="A/B/C=1-219"/>
</dbReference>
<dbReference type="PDBsum" id="2EGZ"/>
<dbReference type="PDBsum" id="2YSW"/>
<dbReference type="SMR" id="O66440"/>
<dbReference type="FunCoup" id="O66440">
    <property type="interactions" value="90"/>
</dbReference>
<dbReference type="STRING" id="224324.aq_021"/>
<dbReference type="EnsemblBacteria" id="AAC06389">
    <property type="protein sequence ID" value="AAC06389"/>
    <property type="gene ID" value="aq_021"/>
</dbReference>
<dbReference type="KEGG" id="aae:aq_021"/>
<dbReference type="PATRIC" id="fig|224324.8.peg.14"/>
<dbReference type="eggNOG" id="COG0710">
    <property type="taxonomic scope" value="Bacteria"/>
</dbReference>
<dbReference type="HOGENOM" id="CLU_064444_2_1_0"/>
<dbReference type="InParanoid" id="O66440"/>
<dbReference type="OrthoDB" id="9813659at2"/>
<dbReference type="UniPathway" id="UPA00053">
    <property type="reaction ID" value="UER00086"/>
</dbReference>
<dbReference type="EvolutionaryTrace" id="O66440"/>
<dbReference type="Proteomes" id="UP000000798">
    <property type="component" value="Chromosome"/>
</dbReference>
<dbReference type="GO" id="GO:0003855">
    <property type="term" value="F:3-dehydroquinate dehydratase activity"/>
    <property type="evidence" value="ECO:0000318"/>
    <property type="project" value="GO_Central"/>
</dbReference>
<dbReference type="GO" id="GO:0046279">
    <property type="term" value="P:3,4-dihydroxybenzoate biosynthetic process"/>
    <property type="evidence" value="ECO:0000318"/>
    <property type="project" value="GO_Central"/>
</dbReference>
<dbReference type="GO" id="GO:0008652">
    <property type="term" value="P:amino acid biosynthetic process"/>
    <property type="evidence" value="ECO:0007669"/>
    <property type="project" value="UniProtKB-KW"/>
</dbReference>
<dbReference type="GO" id="GO:0009073">
    <property type="term" value="P:aromatic amino acid family biosynthetic process"/>
    <property type="evidence" value="ECO:0007669"/>
    <property type="project" value="UniProtKB-KW"/>
</dbReference>
<dbReference type="GO" id="GO:0009423">
    <property type="term" value="P:chorismate biosynthetic process"/>
    <property type="evidence" value="ECO:0007669"/>
    <property type="project" value="UniProtKB-UniRule"/>
</dbReference>
<dbReference type="CDD" id="cd00502">
    <property type="entry name" value="DHQase_I"/>
    <property type="match status" value="1"/>
</dbReference>
<dbReference type="FunFam" id="3.20.20.70:FF:000290">
    <property type="entry name" value="3-dehydroquinate dehydratase"/>
    <property type="match status" value="1"/>
</dbReference>
<dbReference type="Gene3D" id="3.20.20.70">
    <property type="entry name" value="Aldolase class I"/>
    <property type="match status" value="1"/>
</dbReference>
<dbReference type="HAMAP" id="MF_00214">
    <property type="entry name" value="AroD"/>
    <property type="match status" value="1"/>
</dbReference>
<dbReference type="InterPro" id="IPR018508">
    <property type="entry name" value="3-dehydroquinate_DH_AS"/>
</dbReference>
<dbReference type="InterPro" id="IPR013785">
    <property type="entry name" value="Aldolase_TIM"/>
</dbReference>
<dbReference type="InterPro" id="IPR001381">
    <property type="entry name" value="DHquinase_I"/>
</dbReference>
<dbReference type="InterPro" id="IPR050146">
    <property type="entry name" value="Type-I_3-dehydroquinase"/>
</dbReference>
<dbReference type="NCBIfam" id="TIGR01093">
    <property type="entry name" value="aroD"/>
    <property type="match status" value="1"/>
</dbReference>
<dbReference type="PANTHER" id="PTHR43699">
    <property type="entry name" value="3-DEHYDROQUINATE DEHYDRATASE"/>
    <property type="match status" value="1"/>
</dbReference>
<dbReference type="PANTHER" id="PTHR43699:SF1">
    <property type="entry name" value="3-DEHYDROQUINATE DEHYDRATASE"/>
    <property type="match status" value="1"/>
</dbReference>
<dbReference type="Pfam" id="PF01487">
    <property type="entry name" value="DHquinase_I"/>
    <property type="match status" value="1"/>
</dbReference>
<dbReference type="SUPFAM" id="SSF51569">
    <property type="entry name" value="Aldolase"/>
    <property type="match status" value="1"/>
</dbReference>
<dbReference type="PROSITE" id="PS01028">
    <property type="entry name" value="DEHYDROQUINASE_I"/>
    <property type="match status" value="1"/>
</dbReference>
<protein>
    <recommendedName>
        <fullName evidence="1">3-dehydroquinate dehydratase</fullName>
        <shortName evidence="1">3-dehydroquinase</shortName>
        <ecNumber evidence="1">4.2.1.10</ecNumber>
    </recommendedName>
    <alternativeName>
        <fullName evidence="1">Type I DHQase</fullName>
    </alternativeName>
    <alternativeName>
        <fullName evidence="1">Type I dehydroquinase</fullName>
        <shortName evidence="1">DHQ1</shortName>
    </alternativeName>
</protein>
<evidence type="ECO:0000255" key="1">
    <source>
        <dbReference type="HAMAP-Rule" id="MF_00214"/>
    </source>
</evidence>
<evidence type="ECO:0000269" key="2">
    <source>
    </source>
</evidence>
<evidence type="ECO:0007829" key="3">
    <source>
        <dbReference type="PDB" id="2EGZ"/>
    </source>
</evidence>
<evidence type="ECO:0007829" key="4">
    <source>
        <dbReference type="PDB" id="2YSW"/>
    </source>
</evidence>
<accession>O66440</accession>
<feature type="chain" id="PRO_0000138792" description="3-dehydroquinate dehydratase">
    <location>
        <begin position="1"/>
        <end position="219"/>
    </location>
</feature>
<feature type="active site" description="Proton donor/acceptor" evidence="1 2">
    <location>
        <position position="116"/>
    </location>
</feature>
<feature type="active site" description="Schiff-base intermediate with substrate" evidence="1 2">
    <location>
        <position position="142"/>
    </location>
</feature>
<feature type="binding site" evidence="1">
    <location>
        <begin position="28"/>
        <end position="30"/>
    </location>
    <ligand>
        <name>3-dehydroquinate</name>
        <dbReference type="ChEBI" id="CHEBI:32364"/>
    </ligand>
</feature>
<feature type="binding site" evidence="1 2">
    <location>
        <position position="61"/>
    </location>
    <ligand>
        <name>3-dehydroquinate</name>
        <dbReference type="ChEBI" id="CHEBI:32364"/>
    </ligand>
</feature>
<feature type="binding site" evidence="1 2">
    <location>
        <position position="180"/>
    </location>
    <ligand>
        <name>3-dehydroquinate</name>
        <dbReference type="ChEBI" id="CHEBI:32364"/>
    </ligand>
</feature>
<feature type="binding site" evidence="1">
    <location>
        <position position="203"/>
    </location>
    <ligand>
        <name>3-dehydroquinate</name>
        <dbReference type="ChEBI" id="CHEBI:32364"/>
    </ligand>
</feature>
<feature type="strand" evidence="3">
    <location>
        <begin position="2"/>
        <end position="7"/>
    </location>
</feature>
<feature type="helix" evidence="3">
    <location>
        <begin position="12"/>
        <end position="22"/>
    </location>
</feature>
<feature type="strand" evidence="3">
    <location>
        <begin position="25"/>
        <end position="30"/>
    </location>
</feature>
<feature type="helix" evidence="3">
    <location>
        <begin position="31"/>
        <end position="33"/>
    </location>
</feature>
<feature type="helix" evidence="3">
    <location>
        <begin position="39"/>
        <end position="51"/>
    </location>
</feature>
<feature type="strand" evidence="3">
    <location>
        <begin position="55"/>
        <end position="59"/>
    </location>
</feature>
<feature type="helix" evidence="3">
    <location>
        <begin position="63"/>
        <end position="65"/>
    </location>
</feature>
<feature type="helix" evidence="3">
    <location>
        <begin position="73"/>
        <end position="80"/>
    </location>
</feature>
<feature type="turn" evidence="3">
    <location>
        <begin position="81"/>
        <end position="83"/>
    </location>
</feature>
<feature type="strand" evidence="3">
    <location>
        <begin position="84"/>
        <end position="90"/>
    </location>
</feature>
<feature type="helix" evidence="3">
    <location>
        <begin position="94"/>
        <end position="96"/>
    </location>
</feature>
<feature type="helix" evidence="3">
    <location>
        <begin position="97"/>
        <end position="106"/>
    </location>
</feature>
<feature type="strand" evidence="3">
    <location>
        <begin position="110"/>
        <end position="119"/>
    </location>
</feature>
<feature type="helix" evidence="3">
    <location>
        <begin position="124"/>
        <end position="136"/>
    </location>
</feature>
<feature type="strand" evidence="3">
    <location>
        <begin position="139"/>
        <end position="146"/>
    </location>
</feature>
<feature type="helix" evidence="3">
    <location>
        <begin position="150"/>
        <end position="160"/>
    </location>
</feature>
<feature type="strand" evidence="3">
    <location>
        <begin position="167"/>
        <end position="174"/>
    </location>
</feature>
<feature type="helix" evidence="3">
    <location>
        <begin position="175"/>
        <end position="178"/>
    </location>
</feature>
<feature type="helix" evidence="3">
    <location>
        <begin position="179"/>
        <end position="182"/>
    </location>
</feature>
<feature type="helix" evidence="3">
    <location>
        <begin position="183"/>
        <end position="186"/>
    </location>
</feature>
<feature type="strand" evidence="3">
    <location>
        <begin position="190"/>
        <end position="192"/>
    </location>
</feature>
<feature type="strand" evidence="4">
    <location>
        <begin position="194"/>
        <end position="197"/>
    </location>
</feature>
<feature type="helix" evidence="3">
    <location>
        <begin position="206"/>
        <end position="216"/>
    </location>
</feature>
<sequence length="219" mass="24971">MLIAVPLDDTNFSENLKKAKEKGADIVELRVDQFSDTSLNYVKEKLEEVHSQGLKTILTIRSPEEGGREVKNREELFEELSPLSDYTDIELSSRGLLVKLYNITKEAGKKLIISYHNFELTPPNWIIREVLREGYRYGGIPKIAVKANSYEDVARLLCISRQVEGEKILISMGDYGKISRLAGYVFGSVITYCSLEKAFAPGQIPLEEMVELRKKFYRL</sequence>
<comment type="function">
    <text evidence="1">Involved in the third step of the chorismate pathway, which leads to the biosynthesis of aromatic amino acids. Catalyzes the cis-dehydration of 3-dehydroquinate (DHQ) and introduces the first double bond of the aromatic ring to yield 3-dehydroshikimate.</text>
</comment>
<comment type="catalytic activity">
    <reaction evidence="1">
        <text>3-dehydroquinate = 3-dehydroshikimate + H2O</text>
        <dbReference type="Rhea" id="RHEA:21096"/>
        <dbReference type="ChEBI" id="CHEBI:15377"/>
        <dbReference type="ChEBI" id="CHEBI:16630"/>
        <dbReference type="ChEBI" id="CHEBI:32364"/>
        <dbReference type="EC" id="4.2.1.10"/>
    </reaction>
</comment>
<comment type="pathway">
    <text evidence="1">Metabolic intermediate biosynthesis; chorismate biosynthesis; chorismate from D-erythrose 4-phosphate and phosphoenolpyruvate: step 3/7.</text>
</comment>
<comment type="subunit">
    <text evidence="1 2">Homodimer.</text>
</comment>
<comment type="similarity">
    <text evidence="1">Belongs to the type-I 3-dehydroquinase family.</text>
</comment>
<gene>
    <name evidence="1" type="primary">aroD</name>
    <name type="ordered locus">aq_021</name>
</gene>
<proteinExistence type="evidence at protein level"/>
<name>AROD_AQUAE</name>
<reference key="1">
    <citation type="journal article" date="1998" name="Nature">
        <title>The complete genome of the hyperthermophilic bacterium Aquifex aeolicus.</title>
        <authorList>
            <person name="Deckert G."/>
            <person name="Warren P.V."/>
            <person name="Gaasterland T."/>
            <person name="Young W.G."/>
            <person name="Lenox A.L."/>
            <person name="Graham D.E."/>
            <person name="Overbeek R."/>
            <person name="Snead M.A."/>
            <person name="Keller M."/>
            <person name="Aujay M."/>
            <person name="Huber R."/>
            <person name="Feldman R.A."/>
            <person name="Short J.M."/>
            <person name="Olsen G.J."/>
            <person name="Swanson R.V."/>
        </authorList>
    </citation>
    <scope>NUCLEOTIDE SEQUENCE [LARGE SCALE GENOMIC DNA]</scope>
    <source>
        <strain>VF5</strain>
    </source>
</reference>
<reference key="2">
    <citation type="journal article" date="2013" name="Biochem. Biophys. Res. Commun.">
        <title>Crystal structure of type I 3-dehydroquinate dehydratase of Aquifex aeolicus suggests closing of active site flap is not essential for enzyme action.</title>
        <authorList>
            <person name="Devi A.S."/>
            <person name="Ebihara A."/>
            <person name="Kuramitsu S."/>
            <person name="Yokoyama S."/>
            <person name="Kumarevel T.S."/>
            <person name="Ponnuraj K."/>
        </authorList>
    </citation>
    <scope>X-RAY CRYSTALLOGRAPHY (1.75 ANGSTROMS) IN COMPLEX WITH SUBSTRATE ANALOGS</scope>
    <scope>ACTIVE SITE</scope>
    <scope>SUBUNIT</scope>
</reference>
<organism>
    <name type="scientific">Aquifex aeolicus (strain VF5)</name>
    <dbReference type="NCBI Taxonomy" id="224324"/>
    <lineage>
        <taxon>Bacteria</taxon>
        <taxon>Pseudomonadati</taxon>
        <taxon>Aquificota</taxon>
        <taxon>Aquificia</taxon>
        <taxon>Aquificales</taxon>
        <taxon>Aquificaceae</taxon>
        <taxon>Aquifex</taxon>
    </lineage>
</organism>